<accession>B2FQJ3</accession>
<evidence type="ECO:0000255" key="1">
    <source>
        <dbReference type="HAMAP-Rule" id="MF_01345"/>
    </source>
</evidence>
<evidence type="ECO:0000305" key="2"/>
<gene>
    <name evidence="1" type="primary">rpsQ</name>
    <name type="ordered locus">Smlt0915</name>
</gene>
<proteinExistence type="inferred from homology"/>
<sequence length="89" mass="10111">MSDNTEKKTLRTVEGRVVSNKMDKTVTVLVERQVKHALYGKYIKRSTKLHAHDADNACKEGDVVRVTEIAPMSKTKNWRVVEVITRAAE</sequence>
<reference key="1">
    <citation type="journal article" date="2008" name="Genome Biol.">
        <title>The complete genome, comparative and functional analysis of Stenotrophomonas maltophilia reveals an organism heavily shielded by drug resistance determinants.</title>
        <authorList>
            <person name="Crossman L.C."/>
            <person name="Gould V.C."/>
            <person name="Dow J.M."/>
            <person name="Vernikos G.S."/>
            <person name="Okazaki A."/>
            <person name="Sebaihia M."/>
            <person name="Saunders D."/>
            <person name="Arrowsmith C."/>
            <person name="Carver T."/>
            <person name="Peters N."/>
            <person name="Adlem E."/>
            <person name="Kerhornou A."/>
            <person name="Lord A."/>
            <person name="Murphy L."/>
            <person name="Seeger K."/>
            <person name="Squares R."/>
            <person name="Rutter S."/>
            <person name="Quail M.A."/>
            <person name="Rajandream M.A."/>
            <person name="Harris D."/>
            <person name="Churcher C."/>
            <person name="Bentley S.D."/>
            <person name="Parkhill J."/>
            <person name="Thomson N.R."/>
            <person name="Avison M.B."/>
        </authorList>
    </citation>
    <scope>NUCLEOTIDE SEQUENCE [LARGE SCALE GENOMIC DNA]</scope>
    <source>
        <strain>K279a</strain>
    </source>
</reference>
<comment type="function">
    <text evidence="1">One of the primary rRNA binding proteins, it binds specifically to the 5'-end of 16S ribosomal RNA.</text>
</comment>
<comment type="subunit">
    <text evidence="1">Part of the 30S ribosomal subunit.</text>
</comment>
<comment type="similarity">
    <text evidence="1">Belongs to the universal ribosomal protein uS17 family.</text>
</comment>
<keyword id="KW-1185">Reference proteome</keyword>
<keyword id="KW-0687">Ribonucleoprotein</keyword>
<keyword id="KW-0689">Ribosomal protein</keyword>
<keyword id="KW-0694">RNA-binding</keyword>
<keyword id="KW-0699">rRNA-binding</keyword>
<feature type="chain" id="PRO_1000143308" description="Small ribosomal subunit protein uS17">
    <location>
        <begin position="1"/>
        <end position="89"/>
    </location>
</feature>
<dbReference type="EMBL" id="AM743169">
    <property type="protein sequence ID" value="CAQ44484.1"/>
    <property type="molecule type" value="Genomic_DNA"/>
</dbReference>
<dbReference type="RefSeq" id="WP_004154489.1">
    <property type="nucleotide sequence ID" value="NC_010943.1"/>
</dbReference>
<dbReference type="SMR" id="B2FQJ3"/>
<dbReference type="EnsemblBacteria" id="CAQ44484">
    <property type="protein sequence ID" value="CAQ44484"/>
    <property type="gene ID" value="Smlt0915"/>
</dbReference>
<dbReference type="GeneID" id="97259943"/>
<dbReference type="KEGG" id="sml:Smlt0915"/>
<dbReference type="eggNOG" id="COG0186">
    <property type="taxonomic scope" value="Bacteria"/>
</dbReference>
<dbReference type="HOGENOM" id="CLU_073626_1_1_6"/>
<dbReference type="Proteomes" id="UP000008840">
    <property type="component" value="Chromosome"/>
</dbReference>
<dbReference type="GO" id="GO:0022627">
    <property type="term" value="C:cytosolic small ribosomal subunit"/>
    <property type="evidence" value="ECO:0007669"/>
    <property type="project" value="TreeGrafter"/>
</dbReference>
<dbReference type="GO" id="GO:0019843">
    <property type="term" value="F:rRNA binding"/>
    <property type="evidence" value="ECO:0007669"/>
    <property type="project" value="UniProtKB-UniRule"/>
</dbReference>
<dbReference type="GO" id="GO:0003735">
    <property type="term" value="F:structural constituent of ribosome"/>
    <property type="evidence" value="ECO:0007669"/>
    <property type="project" value="InterPro"/>
</dbReference>
<dbReference type="GO" id="GO:0006412">
    <property type="term" value="P:translation"/>
    <property type="evidence" value="ECO:0007669"/>
    <property type="project" value="UniProtKB-UniRule"/>
</dbReference>
<dbReference type="CDD" id="cd00364">
    <property type="entry name" value="Ribosomal_uS17"/>
    <property type="match status" value="1"/>
</dbReference>
<dbReference type="Gene3D" id="2.40.50.140">
    <property type="entry name" value="Nucleic acid-binding proteins"/>
    <property type="match status" value="1"/>
</dbReference>
<dbReference type="HAMAP" id="MF_01345_B">
    <property type="entry name" value="Ribosomal_uS17_B"/>
    <property type="match status" value="1"/>
</dbReference>
<dbReference type="InterPro" id="IPR012340">
    <property type="entry name" value="NA-bd_OB-fold"/>
</dbReference>
<dbReference type="InterPro" id="IPR000266">
    <property type="entry name" value="Ribosomal_uS17"/>
</dbReference>
<dbReference type="InterPro" id="IPR019984">
    <property type="entry name" value="Ribosomal_uS17_bact/chlr"/>
</dbReference>
<dbReference type="NCBIfam" id="NF004123">
    <property type="entry name" value="PRK05610.1"/>
    <property type="match status" value="1"/>
</dbReference>
<dbReference type="NCBIfam" id="TIGR03635">
    <property type="entry name" value="uS17_bact"/>
    <property type="match status" value="1"/>
</dbReference>
<dbReference type="PANTHER" id="PTHR10744">
    <property type="entry name" value="40S RIBOSOMAL PROTEIN S11 FAMILY MEMBER"/>
    <property type="match status" value="1"/>
</dbReference>
<dbReference type="PANTHER" id="PTHR10744:SF1">
    <property type="entry name" value="SMALL RIBOSOMAL SUBUNIT PROTEIN US17M"/>
    <property type="match status" value="1"/>
</dbReference>
<dbReference type="Pfam" id="PF00366">
    <property type="entry name" value="Ribosomal_S17"/>
    <property type="match status" value="1"/>
</dbReference>
<dbReference type="PRINTS" id="PR00973">
    <property type="entry name" value="RIBOSOMALS17"/>
</dbReference>
<dbReference type="SUPFAM" id="SSF50249">
    <property type="entry name" value="Nucleic acid-binding proteins"/>
    <property type="match status" value="1"/>
</dbReference>
<protein>
    <recommendedName>
        <fullName evidence="1">Small ribosomal subunit protein uS17</fullName>
    </recommendedName>
    <alternativeName>
        <fullName evidence="2">30S ribosomal protein S17</fullName>
    </alternativeName>
</protein>
<organism>
    <name type="scientific">Stenotrophomonas maltophilia (strain K279a)</name>
    <dbReference type="NCBI Taxonomy" id="522373"/>
    <lineage>
        <taxon>Bacteria</taxon>
        <taxon>Pseudomonadati</taxon>
        <taxon>Pseudomonadota</taxon>
        <taxon>Gammaproteobacteria</taxon>
        <taxon>Lysobacterales</taxon>
        <taxon>Lysobacteraceae</taxon>
        <taxon>Stenotrophomonas</taxon>
        <taxon>Stenotrophomonas maltophilia group</taxon>
    </lineage>
</organism>
<name>RS17_STRMK</name>